<name>CINAL_GLOC7</name>
<organism>
    <name type="scientific">Gloeothece citriformis (strain PCC 7424)</name>
    <name type="common">Cyanothece sp. (strain PCC 7424)</name>
    <dbReference type="NCBI Taxonomy" id="65393"/>
    <lineage>
        <taxon>Bacteria</taxon>
        <taxon>Bacillati</taxon>
        <taxon>Cyanobacteriota</taxon>
        <taxon>Cyanophyceae</taxon>
        <taxon>Oscillatoriophycideae</taxon>
        <taxon>Chroococcales</taxon>
        <taxon>Aphanothecaceae</taxon>
        <taxon>Gloeothece</taxon>
        <taxon>Gloeothece citriformis</taxon>
    </lineage>
</organism>
<dbReference type="EMBL" id="CP001291">
    <property type="protein sequence ID" value="ACK71864.1"/>
    <property type="molecule type" value="Genomic_DNA"/>
</dbReference>
<dbReference type="RefSeq" id="WP_015955459.1">
    <property type="nucleotide sequence ID" value="NC_011729.1"/>
</dbReference>
<dbReference type="SMR" id="B7KFE8"/>
<dbReference type="STRING" id="65393.PCC7424_3471"/>
<dbReference type="KEGG" id="cyc:PCC7424_3471"/>
<dbReference type="eggNOG" id="COG1058">
    <property type="taxonomic scope" value="Bacteria"/>
</dbReference>
<dbReference type="eggNOG" id="COG1546">
    <property type="taxonomic scope" value="Bacteria"/>
</dbReference>
<dbReference type="HOGENOM" id="CLU_030805_9_3_3"/>
<dbReference type="OrthoDB" id="9801454at2"/>
<dbReference type="Proteomes" id="UP000002384">
    <property type="component" value="Chromosome"/>
</dbReference>
<dbReference type="CDD" id="cd00885">
    <property type="entry name" value="cinA"/>
    <property type="match status" value="1"/>
</dbReference>
<dbReference type="Gene3D" id="3.30.70.2860">
    <property type="match status" value="1"/>
</dbReference>
<dbReference type="Gene3D" id="3.90.950.20">
    <property type="entry name" value="CinA-like"/>
    <property type="match status" value="1"/>
</dbReference>
<dbReference type="Gene3D" id="3.40.980.10">
    <property type="entry name" value="MoaB/Mog-like domain"/>
    <property type="match status" value="1"/>
</dbReference>
<dbReference type="HAMAP" id="MF_00226_B">
    <property type="entry name" value="CinA_B"/>
    <property type="match status" value="1"/>
</dbReference>
<dbReference type="InterPro" id="IPR050101">
    <property type="entry name" value="CinA"/>
</dbReference>
<dbReference type="InterPro" id="IPR036653">
    <property type="entry name" value="CinA-like_C"/>
</dbReference>
<dbReference type="InterPro" id="IPR008136">
    <property type="entry name" value="CinA_C"/>
</dbReference>
<dbReference type="InterPro" id="IPR041424">
    <property type="entry name" value="CinA_KH"/>
</dbReference>
<dbReference type="InterPro" id="IPR008135">
    <property type="entry name" value="Competence-induced_CinA"/>
</dbReference>
<dbReference type="InterPro" id="IPR036425">
    <property type="entry name" value="MoaB/Mog-like_dom_sf"/>
</dbReference>
<dbReference type="InterPro" id="IPR001453">
    <property type="entry name" value="MoaB/Mog_dom"/>
</dbReference>
<dbReference type="NCBIfam" id="TIGR00200">
    <property type="entry name" value="cinA_nterm"/>
    <property type="match status" value="1"/>
</dbReference>
<dbReference type="NCBIfam" id="TIGR00177">
    <property type="entry name" value="molyb_syn"/>
    <property type="match status" value="1"/>
</dbReference>
<dbReference type="NCBIfam" id="TIGR00199">
    <property type="entry name" value="PncC_domain"/>
    <property type="match status" value="1"/>
</dbReference>
<dbReference type="NCBIfam" id="NF001813">
    <property type="entry name" value="PRK00549.1"/>
    <property type="match status" value="1"/>
</dbReference>
<dbReference type="PANTHER" id="PTHR13939">
    <property type="entry name" value="NICOTINAMIDE-NUCLEOTIDE AMIDOHYDROLASE PNCC"/>
    <property type="match status" value="1"/>
</dbReference>
<dbReference type="PANTHER" id="PTHR13939:SF0">
    <property type="entry name" value="NMN AMIDOHYDROLASE-LIKE PROTEIN YFAY"/>
    <property type="match status" value="1"/>
</dbReference>
<dbReference type="Pfam" id="PF02464">
    <property type="entry name" value="CinA"/>
    <property type="match status" value="1"/>
</dbReference>
<dbReference type="Pfam" id="PF18146">
    <property type="entry name" value="CinA_KH"/>
    <property type="match status" value="1"/>
</dbReference>
<dbReference type="Pfam" id="PF00994">
    <property type="entry name" value="MoCF_biosynth"/>
    <property type="match status" value="1"/>
</dbReference>
<dbReference type="PIRSF" id="PIRSF006728">
    <property type="entry name" value="CinA"/>
    <property type="match status" value="1"/>
</dbReference>
<dbReference type="SMART" id="SM00852">
    <property type="entry name" value="MoCF_biosynth"/>
    <property type="match status" value="1"/>
</dbReference>
<dbReference type="SUPFAM" id="SSF142433">
    <property type="entry name" value="CinA-like"/>
    <property type="match status" value="1"/>
</dbReference>
<dbReference type="SUPFAM" id="SSF53218">
    <property type="entry name" value="Molybdenum cofactor biosynthesis proteins"/>
    <property type="match status" value="1"/>
</dbReference>
<keyword id="KW-1185">Reference proteome</keyword>
<sequence length="417" mass="44855">MSAEIICVGTELLLGDILNSNSQFLGTELAKLGIPHYYQTVVGDNLERLKQVIKIAISRASILIFTGGLGPTPDDLTTQAIAEFFQTPLEENPEILADITEKFAQIGRKMATNNRKQALIPVGADVLPNPSGTAPGIIWQPQEGVTILTFPGVPSEMKQMWQQTAIPFLKSQGWGKELIYSRMMRFRGIGESALAEKVAHLLELANPTVAPYAGLGEARLRITAKAKSLTDAMALIEPVSQEILTLTGDDYYGADQDTLPSVVGQQLRQVAQTVSVAESCTGGGLGEMLTQIPGSSEYFLGGIIAYDNRVKNALLGVNQQDLDQFGAVSEPVAKQMALGVKEKIGSDWGISITGIAGPGGGTDTKPVGLVYIGIADPNGQVEGFEYRLGTRRDRLAIRYLSACNALDQLRRKLLIKI</sequence>
<evidence type="ECO:0000255" key="1">
    <source>
        <dbReference type="HAMAP-Rule" id="MF_00226"/>
    </source>
</evidence>
<accession>B7KFE8</accession>
<reference key="1">
    <citation type="journal article" date="2011" name="MBio">
        <title>Novel metabolic attributes of the genus Cyanothece, comprising a group of unicellular nitrogen-fixing Cyanobacteria.</title>
        <authorList>
            <person name="Bandyopadhyay A."/>
            <person name="Elvitigala T."/>
            <person name="Welsh E."/>
            <person name="Stockel J."/>
            <person name="Liberton M."/>
            <person name="Min H."/>
            <person name="Sherman L.A."/>
            <person name="Pakrasi H.B."/>
        </authorList>
    </citation>
    <scope>NUCLEOTIDE SEQUENCE [LARGE SCALE GENOMIC DNA]</scope>
    <source>
        <strain>PCC 7424</strain>
    </source>
</reference>
<protein>
    <recommendedName>
        <fullName evidence="1">CinA-like protein</fullName>
    </recommendedName>
</protein>
<comment type="similarity">
    <text evidence="1">Belongs to the CinA family.</text>
</comment>
<feature type="chain" id="PRO_1000118917" description="CinA-like protein">
    <location>
        <begin position="1"/>
        <end position="417"/>
    </location>
</feature>
<gene>
    <name type="ordered locus">PCC7424_3471</name>
</gene>
<proteinExistence type="inferred from homology"/>